<sequence>MTIPAFHPGELNVYSAPGDVADVSRALRLTGRRVMLVPTMGALHEGHLALVRAAKRVPGSVVVVSIFVNPMQFGAGEDLDAYPRTPDDDLAQLRAEGVEIAFTPTTAAMYPDGLRTTVQPGPLAAELEGGPRPTHFAGVLTVVLKLLQIVRPDRVFFGEKDYQQLVLIRQLVADFNLDVAVVGVPTVREADGLAMSSRNRYLDPAQRAAAVALSAALTAAAHAATAGAQAALDAARAVLDAAPGVAVDYLELRDIGLGPMPLNGSGRLLVAARLGTTRLLDNIAIEIGTFAGTDRPDGYRAILESHWRN</sequence>
<dbReference type="EC" id="6.3.2.1" evidence="1"/>
<dbReference type="EMBL" id="CP000611">
    <property type="protein sequence ID" value="ABQ75427.1"/>
    <property type="molecule type" value="Genomic_DNA"/>
</dbReference>
<dbReference type="RefSeq" id="WP_003419526.1">
    <property type="nucleotide sequence ID" value="NZ_CP016972.1"/>
</dbReference>
<dbReference type="SMR" id="A5U8S7"/>
<dbReference type="KEGG" id="mra:MRA_3641"/>
<dbReference type="eggNOG" id="COG0414">
    <property type="taxonomic scope" value="Bacteria"/>
</dbReference>
<dbReference type="HOGENOM" id="CLU_047148_0_2_11"/>
<dbReference type="UniPathway" id="UPA00028">
    <property type="reaction ID" value="UER00005"/>
</dbReference>
<dbReference type="Proteomes" id="UP000001988">
    <property type="component" value="Chromosome"/>
</dbReference>
<dbReference type="GO" id="GO:0005829">
    <property type="term" value="C:cytosol"/>
    <property type="evidence" value="ECO:0007669"/>
    <property type="project" value="TreeGrafter"/>
</dbReference>
<dbReference type="GO" id="GO:0005524">
    <property type="term" value="F:ATP binding"/>
    <property type="evidence" value="ECO:0007669"/>
    <property type="project" value="UniProtKB-KW"/>
</dbReference>
<dbReference type="GO" id="GO:0004592">
    <property type="term" value="F:pantoate-beta-alanine ligase activity"/>
    <property type="evidence" value="ECO:0007669"/>
    <property type="project" value="UniProtKB-UniRule"/>
</dbReference>
<dbReference type="GO" id="GO:0015940">
    <property type="term" value="P:pantothenate biosynthetic process"/>
    <property type="evidence" value="ECO:0007669"/>
    <property type="project" value="UniProtKB-UniRule"/>
</dbReference>
<dbReference type="CDD" id="cd00560">
    <property type="entry name" value="PanC"/>
    <property type="match status" value="1"/>
</dbReference>
<dbReference type="FunFam" id="3.30.1300.10:FF:000005">
    <property type="entry name" value="Pantothenate synthetase"/>
    <property type="match status" value="1"/>
</dbReference>
<dbReference type="FunFam" id="3.40.50.620:FF:000114">
    <property type="entry name" value="Pantothenate synthetase"/>
    <property type="match status" value="1"/>
</dbReference>
<dbReference type="Gene3D" id="3.40.50.620">
    <property type="entry name" value="HUPs"/>
    <property type="match status" value="1"/>
</dbReference>
<dbReference type="Gene3D" id="3.30.1300.10">
    <property type="entry name" value="Pantoate-beta-alanine ligase, C-terminal domain"/>
    <property type="match status" value="1"/>
</dbReference>
<dbReference type="HAMAP" id="MF_00158">
    <property type="entry name" value="PanC"/>
    <property type="match status" value="1"/>
</dbReference>
<dbReference type="InterPro" id="IPR003721">
    <property type="entry name" value="Pantoate_ligase"/>
</dbReference>
<dbReference type="InterPro" id="IPR042176">
    <property type="entry name" value="Pantoate_ligase_C"/>
</dbReference>
<dbReference type="InterPro" id="IPR014729">
    <property type="entry name" value="Rossmann-like_a/b/a_fold"/>
</dbReference>
<dbReference type="NCBIfam" id="TIGR00018">
    <property type="entry name" value="panC"/>
    <property type="match status" value="1"/>
</dbReference>
<dbReference type="PANTHER" id="PTHR21299">
    <property type="entry name" value="CYTIDYLATE KINASE/PANTOATE-BETA-ALANINE LIGASE"/>
    <property type="match status" value="1"/>
</dbReference>
<dbReference type="PANTHER" id="PTHR21299:SF1">
    <property type="entry name" value="PANTOATE--BETA-ALANINE LIGASE"/>
    <property type="match status" value="1"/>
</dbReference>
<dbReference type="Pfam" id="PF02569">
    <property type="entry name" value="Pantoate_ligase"/>
    <property type="match status" value="1"/>
</dbReference>
<dbReference type="SUPFAM" id="SSF52374">
    <property type="entry name" value="Nucleotidylyl transferase"/>
    <property type="match status" value="1"/>
</dbReference>
<protein>
    <recommendedName>
        <fullName evidence="1">Pantothenate synthetase</fullName>
        <shortName evidence="1">PS</shortName>
        <ecNumber evidence="1">6.3.2.1</ecNumber>
    </recommendedName>
    <alternativeName>
        <fullName evidence="1">Pantoate--beta-alanine ligase</fullName>
    </alternativeName>
    <alternativeName>
        <fullName evidence="1">Pantoate-activating enzyme</fullName>
    </alternativeName>
</protein>
<keyword id="KW-0067">ATP-binding</keyword>
<keyword id="KW-0963">Cytoplasm</keyword>
<keyword id="KW-0436">Ligase</keyword>
<keyword id="KW-0547">Nucleotide-binding</keyword>
<keyword id="KW-0566">Pantothenate biosynthesis</keyword>
<keyword id="KW-1185">Reference proteome</keyword>
<accession>A5U8S7</accession>
<organism>
    <name type="scientific">Mycobacterium tuberculosis (strain ATCC 25177 / H37Ra)</name>
    <dbReference type="NCBI Taxonomy" id="419947"/>
    <lineage>
        <taxon>Bacteria</taxon>
        <taxon>Bacillati</taxon>
        <taxon>Actinomycetota</taxon>
        <taxon>Actinomycetes</taxon>
        <taxon>Mycobacteriales</taxon>
        <taxon>Mycobacteriaceae</taxon>
        <taxon>Mycobacterium</taxon>
        <taxon>Mycobacterium tuberculosis complex</taxon>
    </lineage>
</organism>
<feature type="chain" id="PRO_0000305491" description="Pantothenate synthetase">
    <location>
        <begin position="1"/>
        <end position="309"/>
    </location>
</feature>
<feature type="active site" description="Proton donor" evidence="1">
    <location>
        <position position="47"/>
    </location>
</feature>
<feature type="binding site" evidence="1">
    <location>
        <begin position="40"/>
        <end position="47"/>
    </location>
    <ligand>
        <name>ATP</name>
        <dbReference type="ChEBI" id="CHEBI:30616"/>
    </ligand>
</feature>
<feature type="binding site" evidence="1">
    <location>
        <position position="72"/>
    </location>
    <ligand>
        <name>(R)-pantoate</name>
        <dbReference type="ChEBI" id="CHEBI:15980"/>
    </ligand>
</feature>
<feature type="binding site" evidence="1">
    <location>
        <position position="72"/>
    </location>
    <ligand>
        <name>beta-alanine</name>
        <dbReference type="ChEBI" id="CHEBI:57966"/>
    </ligand>
</feature>
<feature type="binding site" evidence="1">
    <location>
        <begin position="158"/>
        <end position="161"/>
    </location>
    <ligand>
        <name>ATP</name>
        <dbReference type="ChEBI" id="CHEBI:30616"/>
    </ligand>
</feature>
<feature type="binding site" evidence="1">
    <location>
        <position position="164"/>
    </location>
    <ligand>
        <name>(R)-pantoate</name>
        <dbReference type="ChEBI" id="CHEBI:15980"/>
    </ligand>
</feature>
<feature type="binding site" evidence="1">
    <location>
        <position position="187"/>
    </location>
    <ligand>
        <name>ATP</name>
        <dbReference type="ChEBI" id="CHEBI:30616"/>
    </ligand>
</feature>
<feature type="binding site" evidence="1">
    <location>
        <begin position="195"/>
        <end position="198"/>
    </location>
    <ligand>
        <name>ATP</name>
        <dbReference type="ChEBI" id="CHEBI:30616"/>
    </ligand>
</feature>
<gene>
    <name evidence="1" type="primary">panC</name>
    <name type="ordered locus">MRA_3641</name>
</gene>
<evidence type="ECO:0000255" key="1">
    <source>
        <dbReference type="HAMAP-Rule" id="MF_00158"/>
    </source>
</evidence>
<name>PANC_MYCTA</name>
<comment type="function">
    <text evidence="1">Catalyzes the condensation of pantoate with beta-alanine in an ATP-dependent reaction via a pantoyl-adenylate intermediate.</text>
</comment>
<comment type="catalytic activity">
    <reaction evidence="1">
        <text>(R)-pantoate + beta-alanine + ATP = (R)-pantothenate + AMP + diphosphate + H(+)</text>
        <dbReference type="Rhea" id="RHEA:10912"/>
        <dbReference type="ChEBI" id="CHEBI:15378"/>
        <dbReference type="ChEBI" id="CHEBI:15980"/>
        <dbReference type="ChEBI" id="CHEBI:29032"/>
        <dbReference type="ChEBI" id="CHEBI:30616"/>
        <dbReference type="ChEBI" id="CHEBI:33019"/>
        <dbReference type="ChEBI" id="CHEBI:57966"/>
        <dbReference type="ChEBI" id="CHEBI:456215"/>
        <dbReference type="EC" id="6.3.2.1"/>
    </reaction>
</comment>
<comment type="pathway">
    <text evidence="1">Cofactor biosynthesis; (R)-pantothenate biosynthesis; (R)-pantothenate from (R)-pantoate and beta-alanine: step 1/1.</text>
</comment>
<comment type="subunit">
    <text evidence="1">Homodimer.</text>
</comment>
<comment type="subcellular location">
    <subcellularLocation>
        <location evidence="1">Cytoplasm</location>
    </subcellularLocation>
</comment>
<comment type="miscellaneous">
    <text evidence="1">The reaction proceeds by a bi uni uni bi ping pong mechanism.</text>
</comment>
<comment type="similarity">
    <text evidence="1">Belongs to the pantothenate synthetase family.</text>
</comment>
<proteinExistence type="inferred from homology"/>
<reference key="1">
    <citation type="journal article" date="2008" name="PLoS ONE">
        <title>Genetic basis of virulence attenuation revealed by comparative genomic analysis of Mycobacterium tuberculosis strain H37Ra versus H37Rv.</title>
        <authorList>
            <person name="Zheng H."/>
            <person name="Lu L."/>
            <person name="Wang B."/>
            <person name="Pu S."/>
            <person name="Zhang X."/>
            <person name="Zhu G."/>
            <person name="Shi W."/>
            <person name="Zhang L."/>
            <person name="Wang H."/>
            <person name="Wang S."/>
            <person name="Zhao G."/>
            <person name="Zhang Y."/>
        </authorList>
    </citation>
    <scope>NUCLEOTIDE SEQUENCE [LARGE SCALE GENOMIC DNA]</scope>
    <source>
        <strain>ATCC 25177 / H37Ra</strain>
    </source>
</reference>